<organism>
    <name type="scientific">Helicobacter pylori (strain ATCC 700392 / 26695)</name>
    <name type="common">Campylobacter pylori</name>
    <dbReference type="NCBI Taxonomy" id="85962"/>
    <lineage>
        <taxon>Bacteria</taxon>
        <taxon>Pseudomonadati</taxon>
        <taxon>Campylobacterota</taxon>
        <taxon>Epsilonproteobacteria</taxon>
        <taxon>Campylobacterales</taxon>
        <taxon>Helicobacteraceae</taxon>
        <taxon>Helicobacter</taxon>
    </lineage>
</organism>
<keyword id="KW-0963">Cytoplasm</keyword>
<keyword id="KW-0251">Elongation factor</keyword>
<keyword id="KW-0342">GTP-binding</keyword>
<keyword id="KW-0378">Hydrolase</keyword>
<keyword id="KW-0460">Magnesium</keyword>
<keyword id="KW-0479">Metal-binding</keyword>
<keyword id="KW-0547">Nucleotide-binding</keyword>
<keyword id="KW-0648">Protein biosynthesis</keyword>
<keyword id="KW-1185">Reference proteome</keyword>
<dbReference type="EC" id="3.6.5.3" evidence="2"/>
<dbReference type="EMBL" id="AE000511">
    <property type="protein sequence ID" value="AAD08250.1"/>
    <property type="molecule type" value="Genomic_DNA"/>
</dbReference>
<dbReference type="PIR" id="E64670">
    <property type="entry name" value="E64670"/>
</dbReference>
<dbReference type="RefSeq" id="NP_207997.1">
    <property type="nucleotide sequence ID" value="NC_000915.1"/>
</dbReference>
<dbReference type="RefSeq" id="WP_001040579.1">
    <property type="nucleotide sequence ID" value="NC_018939.1"/>
</dbReference>
<dbReference type="SMR" id="P56003"/>
<dbReference type="DIP" id="DIP-3215N"/>
<dbReference type="FunCoup" id="P56003">
    <property type="interactions" value="410"/>
</dbReference>
<dbReference type="IntAct" id="P56003">
    <property type="interactions" value="5"/>
</dbReference>
<dbReference type="MINT" id="P56003"/>
<dbReference type="STRING" id="85962.HP_1205"/>
<dbReference type="PaxDb" id="85962-C694_06240"/>
<dbReference type="EnsemblBacteria" id="AAD08250">
    <property type="protein sequence ID" value="AAD08250"/>
    <property type="gene ID" value="HP_1205"/>
</dbReference>
<dbReference type="KEGG" id="heo:C694_06240"/>
<dbReference type="KEGG" id="hpy:HP_1205"/>
<dbReference type="PATRIC" id="fig|85962.47.peg.1296"/>
<dbReference type="eggNOG" id="COG0050">
    <property type="taxonomic scope" value="Bacteria"/>
</dbReference>
<dbReference type="InParanoid" id="P56003"/>
<dbReference type="OrthoDB" id="9803139at2"/>
<dbReference type="PhylomeDB" id="P56003"/>
<dbReference type="Proteomes" id="UP000000429">
    <property type="component" value="Chromosome"/>
</dbReference>
<dbReference type="GO" id="GO:0005737">
    <property type="term" value="C:cytoplasm"/>
    <property type="evidence" value="ECO:0007669"/>
    <property type="project" value="UniProtKB-SubCell"/>
</dbReference>
<dbReference type="GO" id="GO:0005525">
    <property type="term" value="F:GTP binding"/>
    <property type="evidence" value="ECO:0007669"/>
    <property type="project" value="UniProtKB-UniRule"/>
</dbReference>
<dbReference type="GO" id="GO:0003924">
    <property type="term" value="F:GTPase activity"/>
    <property type="evidence" value="ECO:0007669"/>
    <property type="project" value="InterPro"/>
</dbReference>
<dbReference type="GO" id="GO:0003746">
    <property type="term" value="F:translation elongation factor activity"/>
    <property type="evidence" value="ECO:0000318"/>
    <property type="project" value="GO_Central"/>
</dbReference>
<dbReference type="GO" id="GO:0006414">
    <property type="term" value="P:translational elongation"/>
    <property type="evidence" value="ECO:0000318"/>
    <property type="project" value="GO_Central"/>
</dbReference>
<dbReference type="CDD" id="cd01884">
    <property type="entry name" value="EF_Tu"/>
    <property type="match status" value="1"/>
</dbReference>
<dbReference type="CDD" id="cd03697">
    <property type="entry name" value="EFTU_II"/>
    <property type="match status" value="1"/>
</dbReference>
<dbReference type="CDD" id="cd03707">
    <property type="entry name" value="EFTU_III"/>
    <property type="match status" value="1"/>
</dbReference>
<dbReference type="FunFam" id="2.40.30.10:FF:000001">
    <property type="entry name" value="Elongation factor Tu"/>
    <property type="match status" value="1"/>
</dbReference>
<dbReference type="FunFam" id="3.40.50.300:FF:000003">
    <property type="entry name" value="Elongation factor Tu"/>
    <property type="match status" value="1"/>
</dbReference>
<dbReference type="Gene3D" id="3.40.50.300">
    <property type="entry name" value="P-loop containing nucleotide triphosphate hydrolases"/>
    <property type="match status" value="1"/>
</dbReference>
<dbReference type="Gene3D" id="2.40.30.10">
    <property type="entry name" value="Translation factors"/>
    <property type="match status" value="2"/>
</dbReference>
<dbReference type="HAMAP" id="MF_00118_B">
    <property type="entry name" value="EF_Tu_B"/>
    <property type="match status" value="1"/>
</dbReference>
<dbReference type="InterPro" id="IPR041709">
    <property type="entry name" value="EF-Tu_GTP-bd"/>
</dbReference>
<dbReference type="InterPro" id="IPR050055">
    <property type="entry name" value="EF-Tu_GTPase"/>
</dbReference>
<dbReference type="InterPro" id="IPR004161">
    <property type="entry name" value="EFTu-like_2"/>
</dbReference>
<dbReference type="InterPro" id="IPR033720">
    <property type="entry name" value="EFTU_2"/>
</dbReference>
<dbReference type="InterPro" id="IPR031157">
    <property type="entry name" value="G_TR_CS"/>
</dbReference>
<dbReference type="InterPro" id="IPR027417">
    <property type="entry name" value="P-loop_NTPase"/>
</dbReference>
<dbReference type="InterPro" id="IPR005225">
    <property type="entry name" value="Small_GTP-bd"/>
</dbReference>
<dbReference type="InterPro" id="IPR000795">
    <property type="entry name" value="T_Tr_GTP-bd_dom"/>
</dbReference>
<dbReference type="InterPro" id="IPR009000">
    <property type="entry name" value="Transl_B-barrel_sf"/>
</dbReference>
<dbReference type="InterPro" id="IPR009001">
    <property type="entry name" value="Transl_elong_EF1A/Init_IF2_C"/>
</dbReference>
<dbReference type="InterPro" id="IPR004541">
    <property type="entry name" value="Transl_elong_EFTu/EF1A_bac/org"/>
</dbReference>
<dbReference type="InterPro" id="IPR004160">
    <property type="entry name" value="Transl_elong_EFTu/EF1A_C"/>
</dbReference>
<dbReference type="NCBIfam" id="TIGR00485">
    <property type="entry name" value="EF-Tu"/>
    <property type="match status" value="1"/>
</dbReference>
<dbReference type="NCBIfam" id="NF000766">
    <property type="entry name" value="PRK00049.1"/>
    <property type="match status" value="1"/>
</dbReference>
<dbReference type="NCBIfam" id="NF009372">
    <property type="entry name" value="PRK12735.1"/>
    <property type="match status" value="1"/>
</dbReference>
<dbReference type="NCBIfam" id="NF009373">
    <property type="entry name" value="PRK12736.1"/>
    <property type="match status" value="1"/>
</dbReference>
<dbReference type="NCBIfam" id="TIGR00231">
    <property type="entry name" value="small_GTP"/>
    <property type="match status" value="1"/>
</dbReference>
<dbReference type="PANTHER" id="PTHR43721:SF22">
    <property type="entry name" value="ELONGATION FACTOR TU, MITOCHONDRIAL"/>
    <property type="match status" value="1"/>
</dbReference>
<dbReference type="PANTHER" id="PTHR43721">
    <property type="entry name" value="ELONGATION FACTOR TU-RELATED"/>
    <property type="match status" value="1"/>
</dbReference>
<dbReference type="Pfam" id="PF00009">
    <property type="entry name" value="GTP_EFTU"/>
    <property type="match status" value="1"/>
</dbReference>
<dbReference type="Pfam" id="PF03144">
    <property type="entry name" value="GTP_EFTU_D2"/>
    <property type="match status" value="1"/>
</dbReference>
<dbReference type="Pfam" id="PF03143">
    <property type="entry name" value="GTP_EFTU_D3"/>
    <property type="match status" value="1"/>
</dbReference>
<dbReference type="PRINTS" id="PR00315">
    <property type="entry name" value="ELONGATNFCT"/>
</dbReference>
<dbReference type="SUPFAM" id="SSF50465">
    <property type="entry name" value="EF-Tu/eEF-1alpha/eIF2-gamma C-terminal domain"/>
    <property type="match status" value="1"/>
</dbReference>
<dbReference type="SUPFAM" id="SSF52540">
    <property type="entry name" value="P-loop containing nucleoside triphosphate hydrolases"/>
    <property type="match status" value="1"/>
</dbReference>
<dbReference type="SUPFAM" id="SSF50447">
    <property type="entry name" value="Translation proteins"/>
    <property type="match status" value="1"/>
</dbReference>
<dbReference type="PROSITE" id="PS00301">
    <property type="entry name" value="G_TR_1"/>
    <property type="match status" value="1"/>
</dbReference>
<dbReference type="PROSITE" id="PS51722">
    <property type="entry name" value="G_TR_2"/>
    <property type="match status" value="1"/>
</dbReference>
<accession>P56003</accession>
<proteinExistence type="inferred from homology"/>
<reference key="1">
    <citation type="journal article" date="1997" name="Nature">
        <title>The complete genome sequence of the gastric pathogen Helicobacter pylori.</title>
        <authorList>
            <person name="Tomb J.-F."/>
            <person name="White O."/>
            <person name="Kerlavage A.R."/>
            <person name="Clayton R.A."/>
            <person name="Sutton G.G."/>
            <person name="Fleischmann R.D."/>
            <person name="Ketchum K.A."/>
            <person name="Klenk H.-P."/>
            <person name="Gill S.R."/>
            <person name="Dougherty B.A."/>
            <person name="Nelson K.E."/>
            <person name="Quackenbush J."/>
            <person name="Zhou L."/>
            <person name="Kirkness E.F."/>
            <person name="Peterson S.N."/>
            <person name="Loftus B.J."/>
            <person name="Richardson D.L."/>
            <person name="Dodson R.J."/>
            <person name="Khalak H.G."/>
            <person name="Glodek A."/>
            <person name="McKenney K."/>
            <person name="FitzGerald L.M."/>
            <person name="Lee N."/>
            <person name="Adams M.D."/>
            <person name="Hickey E.K."/>
            <person name="Berg D.E."/>
            <person name="Gocayne J.D."/>
            <person name="Utterback T.R."/>
            <person name="Peterson J.D."/>
            <person name="Kelley J.M."/>
            <person name="Cotton M.D."/>
            <person name="Weidman J.F."/>
            <person name="Fujii C."/>
            <person name="Bowman C."/>
            <person name="Watthey L."/>
            <person name="Wallin E."/>
            <person name="Hayes W.S."/>
            <person name="Borodovsky M."/>
            <person name="Karp P.D."/>
            <person name="Smith H.O."/>
            <person name="Fraser C.M."/>
            <person name="Venter J.C."/>
        </authorList>
    </citation>
    <scope>NUCLEOTIDE SEQUENCE [LARGE SCALE GENOMIC DNA]</scope>
    <source>
        <strain>ATCC 700392 / 26695</strain>
    </source>
</reference>
<sequence>MAKEKFNRTKPHVNIGTIGHVDHGKTTLSAAISAVLSLKGLAEMKDYDNIDNAPEEKERGITIATSHIEYETENRHYAHVDCPGHADYVKNMITGAAQMDGAILVVSAADGPMPQTREHILLSRQVGVPHIVVFLNKQDMVDDQELLELVEMEVRELLSAYEFPGDDTPIVAGSALRALEEAKAGNVGEWGEKVLKLMAEVDAYIPTPERDTEKTFLMPVEDVFSIAGRGTVVTGRIERGVVKVGDEVEIVGIRPTQKTTVTGVEMFRKELEKGEAGDNVGVLLRGTKKEEVERGMVLCKPGSITPHKKFEGEIYVLSKEEGGRHTPFFTNYRPQFYVRTTDVTGSITLPEGVEMVMPGDNVKITVELISPVALELGTKFAIREGGRTVGAGVVSNIIE</sequence>
<gene>
    <name evidence="2" type="primary">tuf</name>
    <name type="synonym">tufA</name>
    <name type="ordered locus">HP_1205</name>
</gene>
<feature type="chain" id="PRO_0000091333" description="Elongation factor Tu">
    <location>
        <begin position="1"/>
        <end position="399"/>
    </location>
</feature>
<feature type="domain" description="tr-type G">
    <location>
        <begin position="10"/>
        <end position="209"/>
    </location>
</feature>
<feature type="region of interest" description="G1" evidence="1">
    <location>
        <begin position="19"/>
        <end position="26"/>
    </location>
</feature>
<feature type="region of interest" description="G2" evidence="1">
    <location>
        <begin position="60"/>
        <end position="64"/>
    </location>
</feature>
<feature type="region of interest" description="G3" evidence="1">
    <location>
        <begin position="81"/>
        <end position="84"/>
    </location>
</feature>
<feature type="region of interest" description="G4" evidence="1">
    <location>
        <begin position="136"/>
        <end position="139"/>
    </location>
</feature>
<feature type="region of interest" description="G5" evidence="1">
    <location>
        <begin position="174"/>
        <end position="176"/>
    </location>
</feature>
<feature type="binding site" evidence="2">
    <location>
        <begin position="19"/>
        <end position="26"/>
    </location>
    <ligand>
        <name>GTP</name>
        <dbReference type="ChEBI" id="CHEBI:37565"/>
    </ligand>
</feature>
<feature type="binding site" evidence="2">
    <location>
        <position position="26"/>
    </location>
    <ligand>
        <name>Mg(2+)</name>
        <dbReference type="ChEBI" id="CHEBI:18420"/>
    </ligand>
</feature>
<feature type="binding site" evidence="2">
    <location>
        <begin position="81"/>
        <end position="85"/>
    </location>
    <ligand>
        <name>GTP</name>
        <dbReference type="ChEBI" id="CHEBI:37565"/>
    </ligand>
</feature>
<feature type="binding site" evidence="2">
    <location>
        <begin position="136"/>
        <end position="139"/>
    </location>
    <ligand>
        <name>GTP</name>
        <dbReference type="ChEBI" id="CHEBI:37565"/>
    </ligand>
</feature>
<comment type="function">
    <text evidence="2">GTP hydrolase that promotes the GTP-dependent binding of aminoacyl-tRNA to the A-site of ribosomes during protein biosynthesis.</text>
</comment>
<comment type="catalytic activity">
    <reaction evidence="2">
        <text>GTP + H2O = GDP + phosphate + H(+)</text>
        <dbReference type="Rhea" id="RHEA:19669"/>
        <dbReference type="ChEBI" id="CHEBI:15377"/>
        <dbReference type="ChEBI" id="CHEBI:15378"/>
        <dbReference type="ChEBI" id="CHEBI:37565"/>
        <dbReference type="ChEBI" id="CHEBI:43474"/>
        <dbReference type="ChEBI" id="CHEBI:58189"/>
        <dbReference type="EC" id="3.6.5.3"/>
    </reaction>
    <physiologicalReaction direction="left-to-right" evidence="2">
        <dbReference type="Rhea" id="RHEA:19670"/>
    </physiologicalReaction>
</comment>
<comment type="subunit">
    <text evidence="2">Monomer.</text>
</comment>
<comment type="subcellular location">
    <subcellularLocation>
        <location evidence="2">Cytoplasm</location>
    </subcellularLocation>
</comment>
<comment type="similarity">
    <text evidence="2">Belongs to the TRAFAC class translation factor GTPase superfamily. Classic translation factor GTPase family. EF-Tu/EF-1A subfamily.</text>
</comment>
<name>EFTU_HELPY</name>
<evidence type="ECO:0000250" key="1"/>
<evidence type="ECO:0000255" key="2">
    <source>
        <dbReference type="HAMAP-Rule" id="MF_00118"/>
    </source>
</evidence>
<protein>
    <recommendedName>
        <fullName evidence="2">Elongation factor Tu</fullName>
        <shortName evidence="2">EF-Tu</shortName>
        <ecNumber evidence="2">3.6.5.3</ecNumber>
    </recommendedName>
</protein>